<keyword id="KW-0067">ATP-binding</keyword>
<keyword id="KW-0963">Cytoplasm</keyword>
<keyword id="KW-0227">DNA damage</keyword>
<keyword id="KW-0228">DNA excision</keyword>
<keyword id="KW-0234">DNA repair</keyword>
<keyword id="KW-0267">Excision nuclease</keyword>
<keyword id="KW-0547">Nucleotide-binding</keyword>
<keyword id="KW-1185">Reference proteome</keyword>
<keyword id="KW-0742">SOS response</keyword>
<gene>
    <name evidence="1" type="primary">uvrB</name>
    <name type="ordered locus">RB8397</name>
</gene>
<protein>
    <recommendedName>
        <fullName evidence="1">UvrABC system protein B</fullName>
        <shortName evidence="1">Protein UvrB</shortName>
    </recommendedName>
    <alternativeName>
        <fullName evidence="1">Excinuclease ABC subunit B</fullName>
    </alternativeName>
</protein>
<organism>
    <name type="scientific">Rhodopirellula baltica (strain DSM 10527 / NCIMB 13988 / SH1)</name>
    <dbReference type="NCBI Taxonomy" id="243090"/>
    <lineage>
        <taxon>Bacteria</taxon>
        <taxon>Pseudomonadati</taxon>
        <taxon>Planctomycetota</taxon>
        <taxon>Planctomycetia</taxon>
        <taxon>Pirellulales</taxon>
        <taxon>Pirellulaceae</taxon>
        <taxon>Rhodopirellula</taxon>
    </lineage>
</organism>
<accession>Q7UFR2</accession>
<evidence type="ECO:0000255" key="1">
    <source>
        <dbReference type="HAMAP-Rule" id="MF_00204"/>
    </source>
</evidence>
<evidence type="ECO:0000256" key="2">
    <source>
        <dbReference type="SAM" id="MobiDB-lite"/>
    </source>
</evidence>
<sequence>MSITKLAPAAFDLHQPFPPSGDQPAAIAKLIEGIQSGKTAQTLLGATGTGKTYTMANVIASVQRPALILSHNKTLAAQLYGEFKEFFPNNAVHYFVSYYDYYQPEAYIPQRDVYIEKDSSINEEIDRLRLATTSSLVSRRDVVIVASVSSIYGLGSPDDYRQLVVDLHQGEQTRRDHLLLKFVDLQYQRNDIQFERGKFRVRGDSIELWPSYEEFAYRIEMWGDEIEKISLIKPTSGETIKTVEHLYIYPCKHFVMPEDRIQRAIRLLREELTQQLEIFQSQGKLLEAQRLSARTKFDLEMLAEVGHCPGIENYSRPLSGKEPGATPDTLYDFFPKDFITFVDESHVTVPQVRAMYAGDRSRKITLVEHGFRLPCALDNRPLKFDEWEERTGQICFVSATPSDYELERTGGEVVEQIIRPTGLLDPEVEIVSARGQVTHLLEQVRIRAERDERVLVTALTKRLAEDLATYFQEQGVKCRWLHSELNAFERVDLLQELRAGQFDCLVGVNLLREGLDLPEVSLVAILDADKEGFLRSETSLIQTIGRAARNANSRVILYADKVTDSMQMAIDETERRRVIQMEYNAKHGIVPKTVRKSIRKGIDTEAANHKESTRKAQDSGEAIYITIEYVDKLEQEMLAAAEDLEFERAARLRDRVLQLKEHIGKPLSEVEIVDEKSAGKSGGRGRGRRGAKKKGASKGTKIPRPKRG</sequence>
<name>UVRB_RHOBA</name>
<comment type="function">
    <text evidence="1">The UvrABC repair system catalyzes the recognition and processing of DNA lesions. A damage recognition complex composed of 2 UvrA and 2 UvrB subunits scans DNA for abnormalities. Upon binding of the UvrA(2)B(2) complex to a putative damaged site, the DNA wraps around one UvrB monomer. DNA wrap is dependent on ATP binding by UvrB and probably causes local melting of the DNA helix, facilitating insertion of UvrB beta-hairpin between the DNA strands. Then UvrB probes one DNA strand for the presence of a lesion. If a lesion is found the UvrA subunits dissociate and the UvrB-DNA preincision complex is formed. This complex is subsequently bound by UvrC and the second UvrB is released. If no lesion is found, the DNA wraps around the other UvrB subunit that will check the other stand for damage.</text>
</comment>
<comment type="subunit">
    <text evidence="1">Forms a heterotetramer with UvrA during the search for lesions. Interacts with UvrC in an incision complex.</text>
</comment>
<comment type="subcellular location">
    <subcellularLocation>
        <location evidence="1">Cytoplasm</location>
    </subcellularLocation>
</comment>
<comment type="domain">
    <text evidence="1">The beta-hairpin motif is involved in DNA binding.</text>
</comment>
<comment type="similarity">
    <text evidence="1">Belongs to the UvrB family.</text>
</comment>
<feature type="chain" id="PRO_0000226040" description="UvrABC system protein B">
    <location>
        <begin position="1"/>
        <end position="708"/>
    </location>
</feature>
<feature type="domain" description="Helicase ATP-binding" evidence="1">
    <location>
        <begin position="32"/>
        <end position="419"/>
    </location>
</feature>
<feature type="domain" description="Helicase C-terminal" evidence="1">
    <location>
        <begin position="436"/>
        <end position="598"/>
    </location>
</feature>
<feature type="domain" description="UVR" evidence="1">
    <location>
        <begin position="627"/>
        <end position="662"/>
    </location>
</feature>
<feature type="region of interest" description="Disordered" evidence="2">
    <location>
        <begin position="668"/>
        <end position="708"/>
    </location>
</feature>
<feature type="short sequence motif" description="Beta-hairpin">
    <location>
        <begin position="98"/>
        <end position="121"/>
    </location>
</feature>
<feature type="compositionally biased region" description="Basic residues" evidence="2">
    <location>
        <begin position="683"/>
        <end position="708"/>
    </location>
</feature>
<feature type="binding site" evidence="1">
    <location>
        <begin position="45"/>
        <end position="52"/>
    </location>
    <ligand>
        <name>ATP</name>
        <dbReference type="ChEBI" id="CHEBI:30616"/>
    </ligand>
</feature>
<proteinExistence type="inferred from homology"/>
<dbReference type="EMBL" id="BX294147">
    <property type="protein sequence ID" value="CAD78620.1"/>
    <property type="molecule type" value="Genomic_DNA"/>
</dbReference>
<dbReference type="RefSeq" id="NP_868342.1">
    <property type="nucleotide sequence ID" value="NC_005027.1"/>
</dbReference>
<dbReference type="RefSeq" id="WP_007329492.1">
    <property type="nucleotide sequence ID" value="NC_005027.1"/>
</dbReference>
<dbReference type="SMR" id="Q7UFR2"/>
<dbReference type="FunCoup" id="Q7UFR2">
    <property type="interactions" value="155"/>
</dbReference>
<dbReference type="STRING" id="243090.RB8397"/>
<dbReference type="EnsemblBacteria" id="CAD78620">
    <property type="protein sequence ID" value="CAD78620"/>
    <property type="gene ID" value="RB8397"/>
</dbReference>
<dbReference type="KEGG" id="rba:RB8397"/>
<dbReference type="PATRIC" id="fig|243090.15.peg.4045"/>
<dbReference type="eggNOG" id="COG0556">
    <property type="taxonomic scope" value="Bacteria"/>
</dbReference>
<dbReference type="HOGENOM" id="CLU_009621_2_1_0"/>
<dbReference type="InParanoid" id="Q7UFR2"/>
<dbReference type="OrthoDB" id="9806651at2"/>
<dbReference type="Proteomes" id="UP000001025">
    <property type="component" value="Chromosome"/>
</dbReference>
<dbReference type="GO" id="GO:0005737">
    <property type="term" value="C:cytoplasm"/>
    <property type="evidence" value="ECO:0007669"/>
    <property type="project" value="UniProtKB-SubCell"/>
</dbReference>
<dbReference type="GO" id="GO:0009380">
    <property type="term" value="C:excinuclease repair complex"/>
    <property type="evidence" value="ECO:0000318"/>
    <property type="project" value="GO_Central"/>
</dbReference>
<dbReference type="GO" id="GO:0005524">
    <property type="term" value="F:ATP binding"/>
    <property type="evidence" value="ECO:0007669"/>
    <property type="project" value="UniProtKB-UniRule"/>
</dbReference>
<dbReference type="GO" id="GO:0016887">
    <property type="term" value="F:ATP hydrolysis activity"/>
    <property type="evidence" value="ECO:0007669"/>
    <property type="project" value="InterPro"/>
</dbReference>
<dbReference type="GO" id="GO:0003677">
    <property type="term" value="F:DNA binding"/>
    <property type="evidence" value="ECO:0007669"/>
    <property type="project" value="UniProtKB-UniRule"/>
</dbReference>
<dbReference type="GO" id="GO:0009381">
    <property type="term" value="F:excinuclease ABC activity"/>
    <property type="evidence" value="ECO:0007669"/>
    <property type="project" value="UniProtKB-UniRule"/>
</dbReference>
<dbReference type="GO" id="GO:0000715">
    <property type="term" value="P:nucleotide-excision repair, DNA damage recognition"/>
    <property type="evidence" value="ECO:0000318"/>
    <property type="project" value="GO_Central"/>
</dbReference>
<dbReference type="GO" id="GO:0009432">
    <property type="term" value="P:SOS response"/>
    <property type="evidence" value="ECO:0007669"/>
    <property type="project" value="UniProtKB-UniRule"/>
</dbReference>
<dbReference type="CDD" id="cd17916">
    <property type="entry name" value="DEXHc_UvrB"/>
    <property type="match status" value="1"/>
</dbReference>
<dbReference type="CDD" id="cd18790">
    <property type="entry name" value="SF2_C_UvrB"/>
    <property type="match status" value="1"/>
</dbReference>
<dbReference type="Gene3D" id="3.40.50.300">
    <property type="entry name" value="P-loop containing nucleotide triphosphate hydrolases"/>
    <property type="match status" value="3"/>
</dbReference>
<dbReference type="Gene3D" id="4.10.860.10">
    <property type="entry name" value="UVR domain"/>
    <property type="match status" value="1"/>
</dbReference>
<dbReference type="HAMAP" id="MF_00204">
    <property type="entry name" value="UvrB"/>
    <property type="match status" value="1"/>
</dbReference>
<dbReference type="InterPro" id="IPR006935">
    <property type="entry name" value="Helicase/UvrB_N"/>
</dbReference>
<dbReference type="InterPro" id="IPR014001">
    <property type="entry name" value="Helicase_ATP-bd"/>
</dbReference>
<dbReference type="InterPro" id="IPR001650">
    <property type="entry name" value="Helicase_C-like"/>
</dbReference>
<dbReference type="InterPro" id="IPR027417">
    <property type="entry name" value="P-loop_NTPase"/>
</dbReference>
<dbReference type="InterPro" id="IPR001943">
    <property type="entry name" value="UVR_dom"/>
</dbReference>
<dbReference type="InterPro" id="IPR036876">
    <property type="entry name" value="UVR_dom_sf"/>
</dbReference>
<dbReference type="InterPro" id="IPR004807">
    <property type="entry name" value="UvrB"/>
</dbReference>
<dbReference type="InterPro" id="IPR041471">
    <property type="entry name" value="UvrB_inter"/>
</dbReference>
<dbReference type="InterPro" id="IPR024759">
    <property type="entry name" value="UvrB_YAD/RRR_dom"/>
</dbReference>
<dbReference type="NCBIfam" id="NF003673">
    <property type="entry name" value="PRK05298.1"/>
    <property type="match status" value="1"/>
</dbReference>
<dbReference type="NCBIfam" id="TIGR00631">
    <property type="entry name" value="uvrb"/>
    <property type="match status" value="1"/>
</dbReference>
<dbReference type="PANTHER" id="PTHR24029">
    <property type="entry name" value="UVRABC SYSTEM PROTEIN B"/>
    <property type="match status" value="1"/>
</dbReference>
<dbReference type="PANTHER" id="PTHR24029:SF0">
    <property type="entry name" value="UVRABC SYSTEM PROTEIN B"/>
    <property type="match status" value="1"/>
</dbReference>
<dbReference type="Pfam" id="PF00271">
    <property type="entry name" value="Helicase_C"/>
    <property type="match status" value="1"/>
</dbReference>
<dbReference type="Pfam" id="PF04851">
    <property type="entry name" value="ResIII"/>
    <property type="match status" value="1"/>
</dbReference>
<dbReference type="Pfam" id="PF02151">
    <property type="entry name" value="UVR"/>
    <property type="match status" value="1"/>
</dbReference>
<dbReference type="Pfam" id="PF12344">
    <property type="entry name" value="UvrB"/>
    <property type="match status" value="1"/>
</dbReference>
<dbReference type="Pfam" id="PF17757">
    <property type="entry name" value="UvrB_inter"/>
    <property type="match status" value="1"/>
</dbReference>
<dbReference type="SMART" id="SM00487">
    <property type="entry name" value="DEXDc"/>
    <property type="match status" value="1"/>
</dbReference>
<dbReference type="SMART" id="SM00490">
    <property type="entry name" value="HELICc"/>
    <property type="match status" value="1"/>
</dbReference>
<dbReference type="SUPFAM" id="SSF46600">
    <property type="entry name" value="C-terminal UvrC-binding domain of UvrB"/>
    <property type="match status" value="1"/>
</dbReference>
<dbReference type="SUPFAM" id="SSF52540">
    <property type="entry name" value="P-loop containing nucleoside triphosphate hydrolases"/>
    <property type="match status" value="2"/>
</dbReference>
<dbReference type="PROSITE" id="PS51192">
    <property type="entry name" value="HELICASE_ATP_BIND_1"/>
    <property type="match status" value="1"/>
</dbReference>
<dbReference type="PROSITE" id="PS51194">
    <property type="entry name" value="HELICASE_CTER"/>
    <property type="match status" value="1"/>
</dbReference>
<dbReference type="PROSITE" id="PS50151">
    <property type="entry name" value="UVR"/>
    <property type="match status" value="1"/>
</dbReference>
<reference key="1">
    <citation type="journal article" date="2003" name="Proc. Natl. Acad. Sci. U.S.A.">
        <title>Complete genome sequence of the marine planctomycete Pirellula sp. strain 1.</title>
        <authorList>
            <person name="Gloeckner F.O."/>
            <person name="Kube M."/>
            <person name="Bauer M."/>
            <person name="Teeling H."/>
            <person name="Lombardot T."/>
            <person name="Ludwig W."/>
            <person name="Gade D."/>
            <person name="Beck A."/>
            <person name="Borzym K."/>
            <person name="Heitmann K."/>
            <person name="Rabus R."/>
            <person name="Schlesner H."/>
            <person name="Amann R."/>
            <person name="Reinhardt R."/>
        </authorList>
    </citation>
    <scope>NUCLEOTIDE SEQUENCE [LARGE SCALE GENOMIC DNA]</scope>
    <source>
        <strain>DSM 10527 / NCIMB 13988 / SH1</strain>
    </source>
</reference>